<protein>
    <recommendedName>
        <fullName evidence="5">Aspartate aminotransferase</fullName>
        <shortName evidence="6">AAT</shortName>
        <shortName evidence="5">AspAT</shortName>
        <ecNumber evidence="4">2.6.1.1</ecNumber>
    </recommendedName>
</protein>
<feature type="chain" id="PRO_0000448263" description="Aspartate aminotransferase">
    <location>
        <begin position="1"/>
        <end position="400"/>
    </location>
</feature>
<feature type="binding site" evidence="1">
    <location>
        <position position="37"/>
    </location>
    <ligand>
        <name>L-aspartate</name>
        <dbReference type="ChEBI" id="CHEBI:29991"/>
    </ligand>
</feature>
<feature type="binding site" evidence="3">
    <location>
        <position position="126"/>
    </location>
    <ligand>
        <name>L-aspartate</name>
        <dbReference type="ChEBI" id="CHEBI:29991"/>
    </ligand>
</feature>
<feature type="binding site" evidence="3">
    <location>
        <position position="176"/>
    </location>
    <ligand>
        <name>L-aspartate</name>
        <dbReference type="ChEBI" id="CHEBI:29991"/>
    </ligand>
</feature>
<feature type="binding site" evidence="3">
    <location>
        <position position="367"/>
    </location>
    <ligand>
        <name>L-aspartate</name>
        <dbReference type="ChEBI" id="CHEBI:29991"/>
    </ligand>
</feature>
<feature type="modified residue" description="N6-(pyridoxal phosphate)lysine" evidence="2">
    <location>
        <position position="238"/>
    </location>
</feature>
<keyword id="KW-0032">Aminotransferase</keyword>
<keyword id="KW-0963">Cytoplasm</keyword>
<keyword id="KW-0663">Pyridoxal phosphate</keyword>
<keyword id="KW-0808">Transferase</keyword>
<evidence type="ECO:0000250" key="1">
    <source>
        <dbReference type="UniProtKB" id="P00509"/>
    </source>
</evidence>
<evidence type="ECO:0000250" key="2">
    <source>
        <dbReference type="UniProtKB" id="P58350"/>
    </source>
</evidence>
<evidence type="ECO:0000250" key="3">
    <source>
        <dbReference type="UniProtKB" id="Q56232"/>
    </source>
</evidence>
<evidence type="ECO:0000269" key="4">
    <source>
    </source>
</evidence>
<evidence type="ECO:0000303" key="5">
    <source>
    </source>
</evidence>
<evidence type="ECO:0000305" key="6"/>
<evidence type="ECO:0000312" key="7">
    <source>
        <dbReference type="EMBL" id="ACS85258.1"/>
    </source>
</evidence>
<proteinExistence type="evidence at protein level"/>
<dbReference type="EC" id="2.6.1.1" evidence="4"/>
<dbReference type="EMBL" id="CP001654">
    <property type="protein sequence ID" value="ACS85258.1"/>
    <property type="molecule type" value="Genomic_DNA"/>
</dbReference>
<dbReference type="RefSeq" id="WP_012765075.1">
    <property type="nucleotide sequence ID" value="NC_012880.1"/>
</dbReference>
<dbReference type="SMR" id="C6C2Z3"/>
<dbReference type="STRING" id="579405.Dd703_1457"/>
<dbReference type="KEGG" id="dda:Dd703_1457"/>
<dbReference type="eggNOG" id="COG0436">
    <property type="taxonomic scope" value="Bacteria"/>
</dbReference>
<dbReference type="HOGENOM" id="CLU_017584_4_3_6"/>
<dbReference type="Proteomes" id="UP000002734">
    <property type="component" value="Chromosome"/>
</dbReference>
<dbReference type="GO" id="GO:0005737">
    <property type="term" value="C:cytoplasm"/>
    <property type="evidence" value="ECO:0007669"/>
    <property type="project" value="UniProtKB-SubCell"/>
</dbReference>
<dbReference type="GO" id="GO:0004069">
    <property type="term" value="F:L-aspartate:2-oxoglutarate aminotransferase activity"/>
    <property type="evidence" value="ECO:0007669"/>
    <property type="project" value="UniProtKB-EC"/>
</dbReference>
<dbReference type="GO" id="GO:0030170">
    <property type="term" value="F:pyridoxal phosphate binding"/>
    <property type="evidence" value="ECO:0007669"/>
    <property type="project" value="InterPro"/>
</dbReference>
<dbReference type="GO" id="GO:0006520">
    <property type="term" value="P:amino acid metabolic process"/>
    <property type="evidence" value="ECO:0007669"/>
    <property type="project" value="InterPro"/>
</dbReference>
<dbReference type="GO" id="GO:0009058">
    <property type="term" value="P:biosynthetic process"/>
    <property type="evidence" value="ECO:0007669"/>
    <property type="project" value="InterPro"/>
</dbReference>
<dbReference type="CDD" id="cd00609">
    <property type="entry name" value="AAT_like"/>
    <property type="match status" value="1"/>
</dbReference>
<dbReference type="FunFam" id="3.40.640.10:FF:000033">
    <property type="entry name" value="Aspartate aminotransferase"/>
    <property type="match status" value="1"/>
</dbReference>
<dbReference type="Gene3D" id="3.90.1150.10">
    <property type="entry name" value="Aspartate Aminotransferase, domain 1"/>
    <property type="match status" value="1"/>
</dbReference>
<dbReference type="Gene3D" id="3.40.640.10">
    <property type="entry name" value="Type I PLP-dependent aspartate aminotransferase-like (Major domain)"/>
    <property type="match status" value="1"/>
</dbReference>
<dbReference type="InterPro" id="IPR004839">
    <property type="entry name" value="Aminotransferase_I/II_large"/>
</dbReference>
<dbReference type="InterPro" id="IPR050596">
    <property type="entry name" value="AspAT/PAT-like"/>
</dbReference>
<dbReference type="InterPro" id="IPR004838">
    <property type="entry name" value="NHTrfase_class1_PyrdxlP-BS"/>
</dbReference>
<dbReference type="InterPro" id="IPR015424">
    <property type="entry name" value="PyrdxlP-dep_Trfase"/>
</dbReference>
<dbReference type="InterPro" id="IPR015421">
    <property type="entry name" value="PyrdxlP-dep_Trfase_major"/>
</dbReference>
<dbReference type="InterPro" id="IPR015422">
    <property type="entry name" value="PyrdxlP-dep_Trfase_small"/>
</dbReference>
<dbReference type="PANTHER" id="PTHR46383">
    <property type="entry name" value="ASPARTATE AMINOTRANSFERASE"/>
    <property type="match status" value="1"/>
</dbReference>
<dbReference type="PANTHER" id="PTHR46383:SF1">
    <property type="entry name" value="ASPARTATE AMINOTRANSFERASE"/>
    <property type="match status" value="1"/>
</dbReference>
<dbReference type="Pfam" id="PF00155">
    <property type="entry name" value="Aminotran_1_2"/>
    <property type="match status" value="1"/>
</dbReference>
<dbReference type="SUPFAM" id="SSF53383">
    <property type="entry name" value="PLP-dependent transferases"/>
    <property type="match status" value="1"/>
</dbReference>
<dbReference type="PROSITE" id="PS00105">
    <property type="entry name" value="AA_TRANSFER_CLASS_1"/>
    <property type="match status" value="1"/>
</dbReference>
<accession>C6C2Z3</accession>
<gene>
    <name evidence="7" type="ordered locus">Dd703_1457</name>
</gene>
<comment type="function">
    <text evidence="4">Catalyzes the reversible conversion of aspartate and 2-oxoglutarate to glutamate and oxaloacetate (PubMed:25070637). Has very weak prephenate aminotransferase activity (PubMed:25070637).</text>
</comment>
<comment type="catalytic activity">
    <reaction evidence="4">
        <text>L-aspartate + 2-oxoglutarate = oxaloacetate + L-glutamate</text>
        <dbReference type="Rhea" id="RHEA:21824"/>
        <dbReference type="ChEBI" id="CHEBI:16452"/>
        <dbReference type="ChEBI" id="CHEBI:16810"/>
        <dbReference type="ChEBI" id="CHEBI:29985"/>
        <dbReference type="ChEBI" id="CHEBI:29991"/>
        <dbReference type="EC" id="2.6.1.1"/>
    </reaction>
</comment>
<comment type="cofactor">
    <cofactor evidence="3">
        <name>pyridoxal 5'-phosphate</name>
        <dbReference type="ChEBI" id="CHEBI:597326"/>
    </cofactor>
</comment>
<comment type="subunit">
    <text evidence="3">Homodimer.</text>
</comment>
<comment type="subcellular location">
    <subcellularLocation>
        <location evidence="6">Cytoplasm</location>
    </subcellularLocation>
</comment>
<comment type="similarity">
    <text evidence="6">Belongs to the class-I pyridoxal-phosphate-dependent aminotransferase family.</text>
</comment>
<organism>
    <name type="scientific">Musicola paradisiaca (strain Ech703)</name>
    <name type="common">Dickeya paradisiaca</name>
    <name type="synonym">Dickeya dadantii</name>
    <dbReference type="NCBI Taxonomy" id="579405"/>
    <lineage>
        <taxon>Bacteria</taxon>
        <taxon>Pseudomonadati</taxon>
        <taxon>Pseudomonadota</taxon>
        <taxon>Gammaproteobacteria</taxon>
        <taxon>Enterobacterales</taxon>
        <taxon>Pectobacteriaceae</taxon>
        <taxon>Musicola</taxon>
    </lineage>
</organism>
<name>AAT_MUSP7</name>
<sequence length="400" mass="44119">MRSVADRVKRIGLSETYAILDKVKKMKAEGHVVYDLGGGEPDFSTPEHIINFTVSAMKNGMTHYTASKGSPGLLKAIANRLFEENHISACWDKNIIVTPSAKHALFITLMTLLNPGDEIVIPSPCWVSYIAMAEMAGAKAVDLPLTRENKYQITRKALAACITDKTRVLLLNNPNNPTGHILTEEEIQVICQVALEHDLFVVMDEIYEHIRYITAPHRSIAAEPGMFERTITVSGFSKAWAMTGWRLGYLCAPEYVLNEILKVQQHSVGCAGAFIQQGGLAALIGDRQPMEDMVKAYRKRRDYMVDSLNRIPGIECYVPEGGLYVYADIRGLGMGDAQTFTLWLLAHAHVAVTPGTAFGKEETMMIRLSFAGAMETIVAAMDSIAEAITEYDASLQQEAS</sequence>
<reference key="1">
    <citation type="submission" date="2009-06" db="EMBL/GenBank/DDBJ databases">
        <title>Complete sequence of Dickeya dadantii Ech703.</title>
        <authorList>
            <consortium name="US DOE Joint Genome Institute"/>
            <person name="Lucas S."/>
            <person name="Copeland A."/>
            <person name="Lapidus A."/>
            <person name="Glavina del Rio T."/>
            <person name="Dalin E."/>
            <person name="Tice H."/>
            <person name="Bruce D."/>
            <person name="Goodwin L."/>
            <person name="Pitluck S."/>
            <person name="Chertkov O."/>
            <person name="Brettin T."/>
            <person name="Detter J.C."/>
            <person name="Han C."/>
            <person name="Larimer F."/>
            <person name="Land M."/>
            <person name="Hauser L."/>
            <person name="Kyrpides N."/>
            <person name="Mikhailova N."/>
            <person name="Balakrishnan V."/>
            <person name="Glasner J."/>
            <person name="Perna N.T."/>
        </authorList>
    </citation>
    <scope>NUCLEOTIDE SEQUENCE [LARGE SCALE GENOMIC DNA]</scope>
    <source>
        <strain>Ech703</strain>
    </source>
</reference>
<reference key="2">
    <citation type="journal article" date="2014" name="Plant Cell">
        <title>Phylobiochemical characterization of class-Ib aspartate/prephenate aminotransferases reveals evolution of the plant arogenate phenylalanine pathway.</title>
        <authorList>
            <person name="Dornfeld C."/>
            <person name="Weisberg A.J."/>
            <person name="Ritesh K.C."/>
            <person name="Dudareva N."/>
            <person name="Jelesko J.G."/>
            <person name="Maeda H.A."/>
        </authorList>
    </citation>
    <scope>FUNCTION</scope>
    <scope>CATALYTIC ACTIVITY</scope>
</reference>